<reference key="1">
    <citation type="journal article" date="2001" name="DNA Res.">
        <title>Complete genome sequence of an aerobic thermoacidophilic Crenarchaeon, Sulfolobus tokodaii strain7.</title>
        <authorList>
            <person name="Kawarabayasi Y."/>
            <person name="Hino Y."/>
            <person name="Horikawa H."/>
            <person name="Jin-no K."/>
            <person name="Takahashi M."/>
            <person name="Sekine M."/>
            <person name="Baba S."/>
            <person name="Ankai A."/>
            <person name="Kosugi H."/>
            <person name="Hosoyama A."/>
            <person name="Fukui S."/>
            <person name="Nagai Y."/>
            <person name="Nishijima K."/>
            <person name="Otsuka R."/>
            <person name="Nakazawa H."/>
            <person name="Takamiya M."/>
            <person name="Kato Y."/>
            <person name="Yoshizawa T."/>
            <person name="Tanaka T."/>
            <person name="Kudoh Y."/>
            <person name="Yamazaki J."/>
            <person name="Kushida N."/>
            <person name="Oguchi A."/>
            <person name="Aoki K."/>
            <person name="Masuda S."/>
            <person name="Yanagii M."/>
            <person name="Nishimura M."/>
            <person name="Yamagishi A."/>
            <person name="Oshima T."/>
            <person name="Kikuchi H."/>
        </authorList>
    </citation>
    <scope>NUCLEOTIDE SEQUENCE [LARGE SCALE GENOMIC DNA]</scope>
    <source>
        <strain>DSM 16993 / JCM 10545 / NBRC 100140 / 7</strain>
    </source>
</reference>
<dbReference type="EMBL" id="BA000023">
    <property type="protein sequence ID" value="BAK54282.1"/>
    <property type="molecule type" value="Genomic_DNA"/>
</dbReference>
<dbReference type="RefSeq" id="WP_052846316.1">
    <property type="nucleotide sequence ID" value="NC_003106.2"/>
</dbReference>
<dbReference type="SMR" id="Q975H5"/>
<dbReference type="STRING" id="273063.STK_04370"/>
<dbReference type="GeneID" id="1458373"/>
<dbReference type="KEGG" id="sto:STK_04370"/>
<dbReference type="PATRIC" id="fig|273063.9.peg.507"/>
<dbReference type="eggNOG" id="arCOG01559">
    <property type="taxonomic scope" value="Archaea"/>
</dbReference>
<dbReference type="OrthoDB" id="6290at2157"/>
<dbReference type="Proteomes" id="UP000001015">
    <property type="component" value="Chromosome"/>
</dbReference>
<dbReference type="GO" id="GO:0005829">
    <property type="term" value="C:cytosol"/>
    <property type="evidence" value="ECO:0007669"/>
    <property type="project" value="TreeGrafter"/>
</dbReference>
<dbReference type="GO" id="GO:1990904">
    <property type="term" value="C:ribonucleoprotein complex"/>
    <property type="evidence" value="ECO:0007669"/>
    <property type="project" value="TreeGrafter"/>
</dbReference>
<dbReference type="GO" id="GO:0005525">
    <property type="term" value="F:GTP binding"/>
    <property type="evidence" value="ECO:0007669"/>
    <property type="project" value="UniProtKB-UniRule"/>
</dbReference>
<dbReference type="GO" id="GO:0003924">
    <property type="term" value="F:GTPase activity"/>
    <property type="evidence" value="ECO:0007669"/>
    <property type="project" value="InterPro"/>
</dbReference>
<dbReference type="GO" id="GO:0003746">
    <property type="term" value="F:translation elongation factor activity"/>
    <property type="evidence" value="ECO:0007669"/>
    <property type="project" value="UniProtKB-UniRule"/>
</dbReference>
<dbReference type="CDD" id="cd01681">
    <property type="entry name" value="aeEF2_snRNP_like_IV"/>
    <property type="match status" value="1"/>
</dbReference>
<dbReference type="CDD" id="cd01885">
    <property type="entry name" value="EF2"/>
    <property type="match status" value="1"/>
</dbReference>
<dbReference type="CDD" id="cd16268">
    <property type="entry name" value="EF2_II"/>
    <property type="match status" value="1"/>
</dbReference>
<dbReference type="CDD" id="cd16261">
    <property type="entry name" value="EF2_snRNP_III"/>
    <property type="match status" value="1"/>
</dbReference>
<dbReference type="CDD" id="cd01514">
    <property type="entry name" value="Elongation_Factor_C"/>
    <property type="match status" value="1"/>
</dbReference>
<dbReference type="FunFam" id="3.30.230.10:FF:000009">
    <property type="entry name" value="116 kDa U5 small nuclear ribonucleoprotein component"/>
    <property type="match status" value="1"/>
</dbReference>
<dbReference type="FunFam" id="3.30.70.240:FF:000010">
    <property type="entry name" value="Elongation factor 2"/>
    <property type="match status" value="1"/>
</dbReference>
<dbReference type="FunFam" id="3.40.50.300:FF:000684">
    <property type="entry name" value="Elongation factor 2"/>
    <property type="match status" value="1"/>
</dbReference>
<dbReference type="FunFam" id="3.30.70.870:FF:000002">
    <property type="entry name" value="Translation elongation factor 2"/>
    <property type="match status" value="1"/>
</dbReference>
<dbReference type="Gene3D" id="3.30.230.10">
    <property type="match status" value="1"/>
</dbReference>
<dbReference type="Gene3D" id="3.30.70.240">
    <property type="match status" value="1"/>
</dbReference>
<dbReference type="Gene3D" id="3.30.70.870">
    <property type="entry name" value="Elongation Factor G (Translational Gtpase), domain 3"/>
    <property type="match status" value="1"/>
</dbReference>
<dbReference type="Gene3D" id="3.40.50.300">
    <property type="entry name" value="P-loop containing nucleotide triphosphate hydrolases"/>
    <property type="match status" value="1"/>
</dbReference>
<dbReference type="Gene3D" id="2.40.30.10">
    <property type="entry name" value="Translation factors"/>
    <property type="match status" value="1"/>
</dbReference>
<dbReference type="HAMAP" id="MF_00054_A">
    <property type="entry name" value="EF_G_EF_2_A"/>
    <property type="match status" value="1"/>
</dbReference>
<dbReference type="InterPro" id="IPR041095">
    <property type="entry name" value="EFG_II"/>
</dbReference>
<dbReference type="InterPro" id="IPR035647">
    <property type="entry name" value="EFG_III/V"/>
</dbReference>
<dbReference type="InterPro" id="IPR000640">
    <property type="entry name" value="EFG_V-like"/>
</dbReference>
<dbReference type="InterPro" id="IPR004161">
    <property type="entry name" value="EFTu-like_2"/>
</dbReference>
<dbReference type="InterPro" id="IPR031157">
    <property type="entry name" value="G_TR_CS"/>
</dbReference>
<dbReference type="InterPro" id="IPR027417">
    <property type="entry name" value="P-loop_NTPase"/>
</dbReference>
<dbReference type="InterPro" id="IPR020568">
    <property type="entry name" value="Ribosomal_Su5_D2-typ_SF"/>
</dbReference>
<dbReference type="InterPro" id="IPR014721">
    <property type="entry name" value="Ribsml_uS5_D2-typ_fold_subgr"/>
</dbReference>
<dbReference type="InterPro" id="IPR005225">
    <property type="entry name" value="Small_GTP-bd"/>
</dbReference>
<dbReference type="InterPro" id="IPR000795">
    <property type="entry name" value="T_Tr_GTP-bd_dom"/>
</dbReference>
<dbReference type="InterPro" id="IPR009000">
    <property type="entry name" value="Transl_B-barrel_sf"/>
</dbReference>
<dbReference type="InterPro" id="IPR004543">
    <property type="entry name" value="Transl_elong_EFG/EF2_arc"/>
</dbReference>
<dbReference type="InterPro" id="IPR005517">
    <property type="entry name" value="Transl_elong_EFG/EF2_IV"/>
</dbReference>
<dbReference type="NCBIfam" id="TIGR00490">
    <property type="entry name" value="aEF-2"/>
    <property type="match status" value="1"/>
</dbReference>
<dbReference type="NCBIfam" id="TIGR00231">
    <property type="entry name" value="small_GTP"/>
    <property type="match status" value="1"/>
</dbReference>
<dbReference type="PANTHER" id="PTHR42908:SF3">
    <property type="entry name" value="ELONGATION FACTOR-LIKE GTPASE 1"/>
    <property type="match status" value="1"/>
</dbReference>
<dbReference type="PANTHER" id="PTHR42908">
    <property type="entry name" value="TRANSLATION ELONGATION FACTOR-RELATED"/>
    <property type="match status" value="1"/>
</dbReference>
<dbReference type="Pfam" id="PF00679">
    <property type="entry name" value="EFG_C"/>
    <property type="match status" value="1"/>
</dbReference>
<dbReference type="Pfam" id="PF14492">
    <property type="entry name" value="EFG_III"/>
    <property type="match status" value="1"/>
</dbReference>
<dbReference type="Pfam" id="PF03764">
    <property type="entry name" value="EFG_IV"/>
    <property type="match status" value="1"/>
</dbReference>
<dbReference type="Pfam" id="PF00009">
    <property type="entry name" value="GTP_EFTU"/>
    <property type="match status" value="1"/>
</dbReference>
<dbReference type="Pfam" id="PF03144">
    <property type="entry name" value="GTP_EFTU_D2"/>
    <property type="match status" value="1"/>
</dbReference>
<dbReference type="PRINTS" id="PR00315">
    <property type="entry name" value="ELONGATNFCT"/>
</dbReference>
<dbReference type="SMART" id="SM00838">
    <property type="entry name" value="EFG_C"/>
    <property type="match status" value="1"/>
</dbReference>
<dbReference type="SMART" id="SM00889">
    <property type="entry name" value="EFG_IV"/>
    <property type="match status" value="1"/>
</dbReference>
<dbReference type="SUPFAM" id="SSF54980">
    <property type="entry name" value="EF-G C-terminal domain-like"/>
    <property type="match status" value="2"/>
</dbReference>
<dbReference type="SUPFAM" id="SSF52540">
    <property type="entry name" value="P-loop containing nucleoside triphosphate hydrolases"/>
    <property type="match status" value="1"/>
</dbReference>
<dbReference type="SUPFAM" id="SSF54211">
    <property type="entry name" value="Ribosomal protein S5 domain 2-like"/>
    <property type="match status" value="1"/>
</dbReference>
<dbReference type="SUPFAM" id="SSF50447">
    <property type="entry name" value="Translation proteins"/>
    <property type="match status" value="1"/>
</dbReference>
<dbReference type="PROSITE" id="PS00301">
    <property type="entry name" value="G_TR_1"/>
    <property type="match status" value="1"/>
</dbReference>
<dbReference type="PROSITE" id="PS51722">
    <property type="entry name" value="G_TR_2"/>
    <property type="match status" value="1"/>
</dbReference>
<protein>
    <recommendedName>
        <fullName>Elongation factor 2</fullName>
        <shortName>EF-2</shortName>
    </recommendedName>
</protein>
<comment type="function">
    <text evidence="1">Catalyzes the GTP-dependent ribosomal translocation step during translation elongation. During this step, the ribosome changes from the pre-translocational (PRE) to the post-translocational (POST) state as the newly formed A-site-bound peptidyl-tRNA and P-site-bound deacylated tRNA move to the P and E sites, respectively. Catalyzes the coordinated movement of the two tRNA molecules, the mRNA and conformational changes in the ribosome (By similarity).</text>
</comment>
<comment type="subcellular location">
    <subcellularLocation>
        <location evidence="1">Cytoplasm</location>
    </subcellularLocation>
</comment>
<comment type="similarity">
    <text evidence="2">Belongs to the TRAFAC class translation factor GTPase superfamily. Classic translation factor GTPase family. EF-G/EF-2 subfamily.</text>
</comment>
<keyword id="KW-0963">Cytoplasm</keyword>
<keyword id="KW-0251">Elongation factor</keyword>
<keyword id="KW-0342">GTP-binding</keyword>
<keyword id="KW-0547">Nucleotide-binding</keyword>
<keyword id="KW-0648">Protein biosynthesis</keyword>
<keyword id="KW-1185">Reference proteome</keyword>
<feature type="initiator methionine" description="Removed" evidence="1">
    <location>
        <position position="1"/>
    </location>
</feature>
<feature type="chain" id="PRO_0000091049" description="Elongation factor 2">
    <location>
        <begin position="2"/>
        <end position="737"/>
    </location>
</feature>
<feature type="domain" description="tr-type G">
    <location>
        <begin position="18"/>
        <end position="262"/>
    </location>
</feature>
<feature type="binding site" evidence="1">
    <location>
        <begin position="27"/>
        <end position="34"/>
    </location>
    <ligand>
        <name>GTP</name>
        <dbReference type="ChEBI" id="CHEBI:37565"/>
    </ligand>
</feature>
<feature type="binding site" evidence="1">
    <location>
        <begin position="93"/>
        <end position="97"/>
    </location>
    <ligand>
        <name>GTP</name>
        <dbReference type="ChEBI" id="CHEBI:37565"/>
    </ligand>
</feature>
<feature type="binding site" evidence="1">
    <location>
        <begin position="147"/>
        <end position="150"/>
    </location>
    <ligand>
        <name>GTP</name>
        <dbReference type="ChEBI" id="CHEBI:37565"/>
    </ligand>
</feature>
<feature type="modified residue" description="Diphthamide" evidence="1">
    <location>
        <position position="604"/>
    </location>
</feature>
<name>EF2_SULTO</name>
<accession>Q975H5</accession>
<accession>F9VMY5</accession>
<evidence type="ECO:0000250" key="1"/>
<evidence type="ECO:0000305" key="2"/>
<gene>
    <name type="primary">fusA</name>
    <name type="ordered locus">STK_04370</name>
</gene>
<sequence>MPRYKTVEQVLSLMKDITRVRNIGIIAHVDHGKTTTSDTLLAAAGIISQKVAGEALALDYLSVEQQRGITVKAANISLYHEIEGKGYVINLIDTPGHVDFSGRVTRSLRILDGSIVVVDAVEGIMTQTETVLRQSLEERVRPILFINKVDRLVKELKLSPQEIQKKLIDMIVEINNLIEMYAEPEYKDAWKIKPELGNVVFGSAKDKWGFSVPIAQKKGVKFSDVVNAYSSGDKSKVEELANRVPIHEALLETVIKFVPNPRDAQKYRIPKIWKGDLDSDIAKAMINADPNGPIVLMISDMKVDPHAGLVATGRVFSGTLRAGEEIWLVNAKRQQRVLQVSLYMGPTRELAEEIPAGNIAAALGLDQARSGETAVDIKYKDANVGSFESLHYVSEPVVTISVEPKNPKDLNKMIDALRKLSIEDPNLLVKINEETGEYLLSGMGFLHLEVSLQLLKENYGVDVVTSPPIVVYRESIRTKSQVFEGKSPNKHNKLYISVEPLNEQTIELIANGTIKEDMDSKEMARILKEQADWDYDEAKKIVAIDENINVFVNATSGVQHLREVMDTILQGFRLAMKEGPLAHEPIRGLKVVLHDAIIHEDPAHRGPAQLYPAVRNAIFAGFLTSKPTLLEPLQKLDIRVPMDFVGNVSGVITRKRGKILNMTQMGSIARITAEIPVSESFELASELRAASAGRAFWGTEFSRWAPVPDSLLLDVIMKIRERKGLPKELPKVEDFLA</sequence>
<proteinExistence type="inferred from homology"/>
<organism>
    <name type="scientific">Sulfurisphaera tokodaii (strain DSM 16993 / JCM 10545 / NBRC 100140 / 7)</name>
    <name type="common">Sulfolobus tokodaii</name>
    <dbReference type="NCBI Taxonomy" id="273063"/>
    <lineage>
        <taxon>Archaea</taxon>
        <taxon>Thermoproteota</taxon>
        <taxon>Thermoprotei</taxon>
        <taxon>Sulfolobales</taxon>
        <taxon>Sulfolobaceae</taxon>
        <taxon>Sulfurisphaera</taxon>
    </lineage>
</organism>